<gene>
    <name evidence="1" type="primary">guaAB</name>
    <name type="ordered locus">Mevan_0027</name>
</gene>
<comment type="function">
    <text evidence="1">Catalyzes the synthesis of GMP from XMP.</text>
</comment>
<comment type="catalytic activity">
    <reaction evidence="1">
        <text>XMP + L-glutamine + ATP + H2O = GMP + L-glutamate + AMP + diphosphate + 2 H(+)</text>
        <dbReference type="Rhea" id="RHEA:11680"/>
        <dbReference type="ChEBI" id="CHEBI:15377"/>
        <dbReference type="ChEBI" id="CHEBI:15378"/>
        <dbReference type="ChEBI" id="CHEBI:29985"/>
        <dbReference type="ChEBI" id="CHEBI:30616"/>
        <dbReference type="ChEBI" id="CHEBI:33019"/>
        <dbReference type="ChEBI" id="CHEBI:57464"/>
        <dbReference type="ChEBI" id="CHEBI:58115"/>
        <dbReference type="ChEBI" id="CHEBI:58359"/>
        <dbReference type="ChEBI" id="CHEBI:456215"/>
        <dbReference type="EC" id="6.3.5.2"/>
    </reaction>
</comment>
<comment type="pathway">
    <text evidence="1">Purine metabolism; GMP biosynthesis; GMP from XMP (L-Gln route): step 1/1.</text>
</comment>
<comment type="subunit">
    <text evidence="1">Heterodimer composed of a glutamine amidotransferase subunit (A) and a GMP-binding subunit (B).</text>
</comment>
<feature type="chain" id="PRO_1000048380" description="GMP synthase [glutamine-hydrolyzing] subunit B">
    <location>
        <begin position="1"/>
        <end position="310"/>
    </location>
</feature>
<feature type="domain" description="GMPS ATP-PPase" evidence="1">
    <location>
        <begin position="2"/>
        <end position="185"/>
    </location>
</feature>
<feature type="binding site" evidence="1">
    <location>
        <begin position="29"/>
        <end position="35"/>
    </location>
    <ligand>
        <name>ATP</name>
        <dbReference type="ChEBI" id="CHEBI:30616"/>
    </ligand>
</feature>
<keyword id="KW-0067">ATP-binding</keyword>
<keyword id="KW-0332">GMP biosynthesis</keyword>
<keyword id="KW-0436">Ligase</keyword>
<keyword id="KW-0547">Nucleotide-binding</keyword>
<keyword id="KW-0658">Purine biosynthesis</keyword>
<organism>
    <name type="scientific">Methanococcus vannielii (strain ATCC 35089 / DSM 1224 / JCM 13029 / OCM 148 / SB)</name>
    <dbReference type="NCBI Taxonomy" id="406327"/>
    <lineage>
        <taxon>Archaea</taxon>
        <taxon>Methanobacteriati</taxon>
        <taxon>Methanobacteriota</taxon>
        <taxon>Methanomada group</taxon>
        <taxon>Methanococci</taxon>
        <taxon>Methanococcales</taxon>
        <taxon>Methanococcaceae</taxon>
        <taxon>Methanococcus</taxon>
    </lineage>
</organism>
<accession>A6UN70</accession>
<proteinExistence type="inferred from homology"/>
<reference key="1">
    <citation type="submission" date="2007-06" db="EMBL/GenBank/DDBJ databases">
        <title>Complete sequence of Methanococcus vannielii SB.</title>
        <authorList>
            <consortium name="US DOE Joint Genome Institute"/>
            <person name="Copeland A."/>
            <person name="Lucas S."/>
            <person name="Lapidus A."/>
            <person name="Barry K."/>
            <person name="Glavina del Rio T."/>
            <person name="Dalin E."/>
            <person name="Tice H."/>
            <person name="Pitluck S."/>
            <person name="Chain P."/>
            <person name="Malfatti S."/>
            <person name="Shin M."/>
            <person name="Vergez L."/>
            <person name="Schmutz J."/>
            <person name="Larimer F."/>
            <person name="Land M."/>
            <person name="Hauser L."/>
            <person name="Kyrpides N."/>
            <person name="Anderson I."/>
            <person name="Sieprawska-Lupa M."/>
            <person name="Whitman W.B."/>
            <person name="Richardson P."/>
        </authorList>
    </citation>
    <scope>NUCLEOTIDE SEQUENCE [LARGE SCALE GENOMIC DNA]</scope>
    <source>
        <strain>ATCC 35089 / DSM 1224 / JCM 13029 / OCM 148 / SB</strain>
    </source>
</reference>
<protein>
    <recommendedName>
        <fullName evidence="1">GMP synthase [glutamine-hydrolyzing] subunit B</fullName>
        <ecNumber evidence="1">6.3.5.2</ecNumber>
    </recommendedName>
    <alternativeName>
        <fullName evidence="1">GMP synthetase</fullName>
    </alternativeName>
</protein>
<dbReference type="EC" id="6.3.5.2" evidence="1"/>
<dbReference type="EMBL" id="CP000742">
    <property type="protein sequence ID" value="ABR53942.1"/>
    <property type="molecule type" value="Genomic_DNA"/>
</dbReference>
<dbReference type="RefSeq" id="WP_011971846.1">
    <property type="nucleotide sequence ID" value="NC_009634.1"/>
</dbReference>
<dbReference type="SMR" id="A6UN70"/>
<dbReference type="STRING" id="406327.Mevan_0027"/>
<dbReference type="GeneID" id="5325732"/>
<dbReference type="KEGG" id="mvn:Mevan_0027"/>
<dbReference type="eggNOG" id="arCOG00085">
    <property type="taxonomic scope" value="Archaea"/>
</dbReference>
<dbReference type="HOGENOM" id="CLU_014340_0_0_2"/>
<dbReference type="OrthoDB" id="33844at2157"/>
<dbReference type="UniPathway" id="UPA00189">
    <property type="reaction ID" value="UER00296"/>
</dbReference>
<dbReference type="Proteomes" id="UP000001107">
    <property type="component" value="Chromosome"/>
</dbReference>
<dbReference type="GO" id="GO:0005829">
    <property type="term" value="C:cytosol"/>
    <property type="evidence" value="ECO:0007669"/>
    <property type="project" value="TreeGrafter"/>
</dbReference>
<dbReference type="GO" id="GO:0005524">
    <property type="term" value="F:ATP binding"/>
    <property type="evidence" value="ECO:0007669"/>
    <property type="project" value="UniProtKB-UniRule"/>
</dbReference>
<dbReference type="GO" id="GO:0003921">
    <property type="term" value="F:GMP synthase activity"/>
    <property type="evidence" value="ECO:0007669"/>
    <property type="project" value="InterPro"/>
</dbReference>
<dbReference type="CDD" id="cd01997">
    <property type="entry name" value="GMP_synthase_C"/>
    <property type="match status" value="1"/>
</dbReference>
<dbReference type="FunFam" id="3.30.300.10:FF:000002">
    <property type="entry name" value="GMP synthase [glutamine-hydrolyzing]"/>
    <property type="match status" value="1"/>
</dbReference>
<dbReference type="Gene3D" id="3.30.300.10">
    <property type="match status" value="1"/>
</dbReference>
<dbReference type="Gene3D" id="3.40.50.620">
    <property type="entry name" value="HUPs"/>
    <property type="match status" value="1"/>
</dbReference>
<dbReference type="HAMAP" id="MF_00345">
    <property type="entry name" value="GMP_synthase_B"/>
    <property type="match status" value="1"/>
</dbReference>
<dbReference type="InterPro" id="IPR001674">
    <property type="entry name" value="GMP_synth_C"/>
</dbReference>
<dbReference type="InterPro" id="IPR026598">
    <property type="entry name" value="GMP_synthase_B"/>
</dbReference>
<dbReference type="InterPro" id="IPR025777">
    <property type="entry name" value="GMPS_ATP_PPase_dom"/>
</dbReference>
<dbReference type="InterPro" id="IPR022310">
    <property type="entry name" value="NAD/GMP_synthase"/>
</dbReference>
<dbReference type="InterPro" id="IPR014729">
    <property type="entry name" value="Rossmann-like_a/b/a_fold"/>
</dbReference>
<dbReference type="NCBIfam" id="TIGR00884">
    <property type="entry name" value="guaA_Cterm"/>
    <property type="match status" value="1"/>
</dbReference>
<dbReference type="PANTHER" id="PTHR11922:SF2">
    <property type="entry name" value="GMP SYNTHASE [GLUTAMINE-HYDROLYZING]"/>
    <property type="match status" value="1"/>
</dbReference>
<dbReference type="PANTHER" id="PTHR11922">
    <property type="entry name" value="GMP SYNTHASE-RELATED"/>
    <property type="match status" value="1"/>
</dbReference>
<dbReference type="Pfam" id="PF00958">
    <property type="entry name" value="GMP_synt_C"/>
    <property type="match status" value="1"/>
</dbReference>
<dbReference type="Pfam" id="PF02540">
    <property type="entry name" value="NAD_synthase"/>
    <property type="match status" value="1"/>
</dbReference>
<dbReference type="SUPFAM" id="SSF52402">
    <property type="entry name" value="Adenine nucleotide alpha hydrolases-like"/>
    <property type="match status" value="1"/>
</dbReference>
<dbReference type="PROSITE" id="PS51553">
    <property type="entry name" value="GMPS_ATP_PPASE"/>
    <property type="match status" value="1"/>
</dbReference>
<evidence type="ECO:0000255" key="1">
    <source>
        <dbReference type="HAMAP-Rule" id="MF_00345"/>
    </source>
</evidence>
<sequence>MFDAKSFIEESVEDIKKQINGRKTIIALSGGVDSSVAAVLTGKAIGDQLLAVYVDTGLMRKNESNEIWNIFKEQMGLNLKIVEAKDLFLSELAGIDDPEQKRKIIGRIFIEVFEKVAKEQGEEILVQGTIAPDWIESEGQIKTHHNIALPSGMVLEVVEPLRDLYKDEVRKLATELGLPEKIAHRQPFPGPGLAVRILGEITEEKLEICKEANFIVSEEIEKTGLQKELWQYFAAVLDTKATGVKGDIRDYNWVVALRFVKSLDAMTAHTPEIPFDLIKRISKRITSEIPNVTRVVLDVTDKPPATIEFE</sequence>
<name>GUAAB_METVS</name>